<proteinExistence type="inferred from homology"/>
<sequence>MIRTMLQGKLHRVKVTQADLHYEGSCAIDQDFLDASGILENEAIDIWNVTNGKRFSTYAIAAERGSRIISVNGAAAHCAEVGDIVIIASFVTMSDEEARTWRPKVAYFEGDNEMKRTAKAIPVQVA</sequence>
<name>PAND_SALSV</name>
<protein>
    <recommendedName>
        <fullName evidence="1">Aspartate 1-decarboxylase</fullName>
        <ecNumber evidence="1">4.1.1.11</ecNumber>
    </recommendedName>
    <alternativeName>
        <fullName evidence="1">Aspartate alpha-decarboxylase</fullName>
    </alternativeName>
    <component>
        <recommendedName>
            <fullName evidence="1">Aspartate 1-decarboxylase beta chain</fullName>
        </recommendedName>
    </component>
    <component>
        <recommendedName>
            <fullName evidence="1">Aspartate 1-decarboxylase alpha chain</fullName>
        </recommendedName>
    </component>
</protein>
<accession>B4TXN2</accession>
<evidence type="ECO:0000255" key="1">
    <source>
        <dbReference type="HAMAP-Rule" id="MF_00446"/>
    </source>
</evidence>
<dbReference type="EC" id="4.1.1.11" evidence="1"/>
<dbReference type="EMBL" id="CP001127">
    <property type="protein sequence ID" value="ACF92230.1"/>
    <property type="molecule type" value="Genomic_DNA"/>
</dbReference>
<dbReference type="RefSeq" id="WP_000621526.1">
    <property type="nucleotide sequence ID" value="NC_011094.1"/>
</dbReference>
<dbReference type="SMR" id="B4TXN2"/>
<dbReference type="GeneID" id="89550440"/>
<dbReference type="KEGG" id="sew:SeSA_A0200"/>
<dbReference type="HOGENOM" id="CLU_115305_2_1_6"/>
<dbReference type="UniPathway" id="UPA00028">
    <property type="reaction ID" value="UER00002"/>
</dbReference>
<dbReference type="Proteomes" id="UP000001865">
    <property type="component" value="Chromosome"/>
</dbReference>
<dbReference type="GO" id="GO:0005829">
    <property type="term" value="C:cytosol"/>
    <property type="evidence" value="ECO:0007669"/>
    <property type="project" value="TreeGrafter"/>
</dbReference>
<dbReference type="GO" id="GO:0004068">
    <property type="term" value="F:aspartate 1-decarboxylase activity"/>
    <property type="evidence" value="ECO:0007669"/>
    <property type="project" value="UniProtKB-UniRule"/>
</dbReference>
<dbReference type="GO" id="GO:0006523">
    <property type="term" value="P:alanine biosynthetic process"/>
    <property type="evidence" value="ECO:0007669"/>
    <property type="project" value="InterPro"/>
</dbReference>
<dbReference type="GO" id="GO:0015940">
    <property type="term" value="P:pantothenate biosynthetic process"/>
    <property type="evidence" value="ECO:0007669"/>
    <property type="project" value="UniProtKB-UniRule"/>
</dbReference>
<dbReference type="CDD" id="cd06919">
    <property type="entry name" value="Asp_decarbox"/>
    <property type="match status" value="1"/>
</dbReference>
<dbReference type="FunFam" id="2.40.40.20:FF:000004">
    <property type="entry name" value="Aspartate 1-decarboxylase"/>
    <property type="match status" value="1"/>
</dbReference>
<dbReference type="Gene3D" id="2.40.40.20">
    <property type="match status" value="1"/>
</dbReference>
<dbReference type="HAMAP" id="MF_00446">
    <property type="entry name" value="PanD"/>
    <property type="match status" value="1"/>
</dbReference>
<dbReference type="InterPro" id="IPR009010">
    <property type="entry name" value="Asp_de-COase-like_dom_sf"/>
</dbReference>
<dbReference type="InterPro" id="IPR003190">
    <property type="entry name" value="Asp_decarbox"/>
</dbReference>
<dbReference type="NCBIfam" id="TIGR00223">
    <property type="entry name" value="panD"/>
    <property type="match status" value="1"/>
</dbReference>
<dbReference type="PANTHER" id="PTHR21012">
    <property type="entry name" value="ASPARTATE 1-DECARBOXYLASE"/>
    <property type="match status" value="1"/>
</dbReference>
<dbReference type="PANTHER" id="PTHR21012:SF0">
    <property type="entry name" value="ASPARTATE 1-DECARBOXYLASE"/>
    <property type="match status" value="1"/>
</dbReference>
<dbReference type="Pfam" id="PF02261">
    <property type="entry name" value="Asp_decarbox"/>
    <property type="match status" value="1"/>
</dbReference>
<dbReference type="PIRSF" id="PIRSF006246">
    <property type="entry name" value="Asp_decarbox"/>
    <property type="match status" value="1"/>
</dbReference>
<dbReference type="SUPFAM" id="SSF50692">
    <property type="entry name" value="ADC-like"/>
    <property type="match status" value="1"/>
</dbReference>
<keyword id="KW-0068">Autocatalytic cleavage</keyword>
<keyword id="KW-0963">Cytoplasm</keyword>
<keyword id="KW-0210">Decarboxylase</keyword>
<keyword id="KW-0456">Lyase</keyword>
<keyword id="KW-0566">Pantothenate biosynthesis</keyword>
<keyword id="KW-0670">Pyruvate</keyword>
<keyword id="KW-0704">Schiff base</keyword>
<keyword id="KW-0865">Zymogen</keyword>
<reference key="1">
    <citation type="journal article" date="2011" name="J. Bacteriol.">
        <title>Comparative genomics of 28 Salmonella enterica isolates: evidence for CRISPR-mediated adaptive sublineage evolution.</title>
        <authorList>
            <person name="Fricke W.F."/>
            <person name="Mammel M.K."/>
            <person name="McDermott P.F."/>
            <person name="Tartera C."/>
            <person name="White D.G."/>
            <person name="Leclerc J.E."/>
            <person name="Ravel J."/>
            <person name="Cebula T.A."/>
        </authorList>
    </citation>
    <scope>NUCLEOTIDE SEQUENCE [LARGE SCALE GENOMIC DNA]</scope>
    <source>
        <strain>CVM19633</strain>
    </source>
</reference>
<feature type="chain" id="PRO_1000192037" description="Aspartate 1-decarboxylase beta chain" evidence="1">
    <location>
        <begin position="1"/>
        <end position="24"/>
    </location>
</feature>
<feature type="chain" id="PRO_1000192038" description="Aspartate 1-decarboxylase alpha chain" evidence="1">
    <location>
        <begin position="25"/>
        <end position="126"/>
    </location>
</feature>
<feature type="active site" description="Schiff-base intermediate with substrate; via pyruvic acid" evidence="1">
    <location>
        <position position="25"/>
    </location>
</feature>
<feature type="active site" description="Proton donor" evidence="1">
    <location>
        <position position="58"/>
    </location>
</feature>
<feature type="binding site" evidence="1">
    <location>
        <position position="57"/>
    </location>
    <ligand>
        <name>substrate</name>
    </ligand>
</feature>
<feature type="binding site" evidence="1">
    <location>
        <begin position="73"/>
        <end position="75"/>
    </location>
    <ligand>
        <name>substrate</name>
    </ligand>
</feature>
<feature type="modified residue" description="Pyruvic acid (Ser)" evidence="1">
    <location>
        <position position="25"/>
    </location>
</feature>
<comment type="function">
    <text evidence="1">Catalyzes the pyruvoyl-dependent decarboxylation of aspartate to produce beta-alanine.</text>
</comment>
<comment type="catalytic activity">
    <reaction evidence="1">
        <text>L-aspartate + H(+) = beta-alanine + CO2</text>
        <dbReference type="Rhea" id="RHEA:19497"/>
        <dbReference type="ChEBI" id="CHEBI:15378"/>
        <dbReference type="ChEBI" id="CHEBI:16526"/>
        <dbReference type="ChEBI" id="CHEBI:29991"/>
        <dbReference type="ChEBI" id="CHEBI:57966"/>
        <dbReference type="EC" id="4.1.1.11"/>
    </reaction>
</comment>
<comment type="cofactor">
    <cofactor evidence="1">
        <name>pyruvate</name>
        <dbReference type="ChEBI" id="CHEBI:15361"/>
    </cofactor>
    <text evidence="1">Binds 1 pyruvoyl group covalently per subunit.</text>
</comment>
<comment type="pathway">
    <text evidence="1">Cofactor biosynthesis; (R)-pantothenate biosynthesis; beta-alanine from L-aspartate: step 1/1.</text>
</comment>
<comment type="subunit">
    <text evidence="1">Heterooctamer of four alpha and four beta subunits.</text>
</comment>
<comment type="subcellular location">
    <subcellularLocation>
        <location evidence="1">Cytoplasm</location>
    </subcellularLocation>
</comment>
<comment type="PTM">
    <text evidence="1">Is synthesized initially as an inactive proenzyme, which is activated by self-cleavage at a specific serine bond to produce a beta-subunit with a hydroxyl group at its C-terminus and an alpha-subunit with a pyruvoyl group at its N-terminus.</text>
</comment>
<comment type="similarity">
    <text evidence="1">Belongs to the PanD family.</text>
</comment>
<gene>
    <name evidence="1" type="primary">panD</name>
    <name type="ordered locus">SeSA_A0200</name>
</gene>
<organism>
    <name type="scientific">Salmonella schwarzengrund (strain CVM19633)</name>
    <dbReference type="NCBI Taxonomy" id="439843"/>
    <lineage>
        <taxon>Bacteria</taxon>
        <taxon>Pseudomonadati</taxon>
        <taxon>Pseudomonadota</taxon>
        <taxon>Gammaproteobacteria</taxon>
        <taxon>Enterobacterales</taxon>
        <taxon>Enterobacteriaceae</taxon>
        <taxon>Salmonella</taxon>
    </lineage>
</organism>